<protein>
    <recommendedName>
        <fullName>Bradykinin-potentiating peptide 11</fullName>
        <shortName>BPP-11</shortName>
    </recommendedName>
</protein>
<name>BPP11_BOTNU</name>
<accession>P0C7S5</accession>
<evidence type="ECO:0000250" key="1"/>
<evidence type="ECO:0000269" key="2">
    <source>
    </source>
</evidence>
<evidence type="ECO:0000305" key="3"/>
<dbReference type="GO" id="GO:0005576">
    <property type="term" value="C:extracellular region"/>
    <property type="evidence" value="ECO:0007669"/>
    <property type="project" value="UniProtKB-SubCell"/>
</dbReference>
<dbReference type="GO" id="GO:0030414">
    <property type="term" value="F:peptidase inhibitor activity"/>
    <property type="evidence" value="ECO:0007669"/>
    <property type="project" value="UniProtKB-KW"/>
</dbReference>
<dbReference type="GO" id="GO:0090729">
    <property type="term" value="F:toxin activity"/>
    <property type="evidence" value="ECO:0007669"/>
    <property type="project" value="UniProtKB-KW"/>
</dbReference>
<dbReference type="GO" id="GO:0008217">
    <property type="term" value="P:regulation of blood pressure"/>
    <property type="evidence" value="ECO:0007669"/>
    <property type="project" value="UniProtKB-KW"/>
</dbReference>
<organism>
    <name type="scientific">Bothrops neuwiedi</name>
    <name type="common">Neuwied's lancehead</name>
    <dbReference type="NCBI Taxonomy" id="95648"/>
    <lineage>
        <taxon>Eukaryota</taxon>
        <taxon>Metazoa</taxon>
        <taxon>Chordata</taxon>
        <taxon>Craniata</taxon>
        <taxon>Vertebrata</taxon>
        <taxon>Euteleostomi</taxon>
        <taxon>Lepidosauria</taxon>
        <taxon>Squamata</taxon>
        <taxon>Bifurcata</taxon>
        <taxon>Unidentata</taxon>
        <taxon>Episquamata</taxon>
        <taxon>Toxicofera</taxon>
        <taxon>Serpentes</taxon>
        <taxon>Colubroidea</taxon>
        <taxon>Viperidae</taxon>
        <taxon>Crotalinae</taxon>
        <taxon>Bothrops</taxon>
    </lineage>
</organism>
<comment type="function">
    <text evidence="1">This peptide both inhibits the activity of the angiotensin-converting enzyme (ACE) and enhances the action of bradykinin by inhibiting the peptidases that inactivate it. It acts as an indirect hypotensive agent (By similarity).</text>
</comment>
<comment type="subcellular location">
    <subcellularLocation>
        <location evidence="2">Secreted</location>
    </subcellularLocation>
</comment>
<comment type="tissue specificity">
    <text evidence="2">Expressed by the venom gland.</text>
</comment>
<comment type="mass spectrometry"/>
<comment type="similarity">
    <text evidence="3">Belongs to the bradykinin-potentiating peptide family.</text>
</comment>
<proteinExistence type="evidence at protein level"/>
<sequence>QWPRPTPQIPP</sequence>
<feature type="peptide" id="PRO_0000343189" description="Bradykinin-potentiating peptide 11">
    <location>
        <begin position="1"/>
        <end position="11"/>
    </location>
</feature>
<feature type="modified residue" description="Pyrrolidone carboxylic acid" evidence="2">
    <location>
        <position position="1"/>
    </location>
</feature>
<reference key="1">
    <citation type="journal article" date="2005" name="Rapid Commun. Mass Spectrom.">
        <title>Fast analysis of low molecular mass compounds present in snake venom: identification of ten new pyroglutamate-containing peptides.</title>
        <authorList>
            <person name="Wermelinger L.S."/>
            <person name="Dutra D.L."/>
            <person name="Oliveira-Carvalho A.L."/>
            <person name="Soares M.R."/>
            <person name="Bloch C. Jr."/>
            <person name="Zingali R.B."/>
        </authorList>
    </citation>
    <scope>PROTEIN SEQUENCE</scope>
    <scope>SUBCELLULAR LOCATION</scope>
    <scope>TISSUE SPECIFICITY</scope>
    <scope>MASS SPECTROMETRY</scope>
    <scope>PYROGLUTAMATE FORMATION AT GLN-1</scope>
    <source>
        <tissue>Venom</tissue>
    </source>
</reference>
<keyword id="KW-0903">Direct protein sequencing</keyword>
<keyword id="KW-0382">Hypotensive agent</keyword>
<keyword id="KW-0481">Metalloenzyme inhibitor</keyword>
<keyword id="KW-0483">Metalloprotease inhibitor</keyword>
<keyword id="KW-0646">Protease inhibitor</keyword>
<keyword id="KW-0873">Pyrrolidone carboxylic acid</keyword>
<keyword id="KW-0964">Secreted</keyword>
<keyword id="KW-0800">Toxin</keyword>